<organism>
    <name type="scientific">Gallus gallus</name>
    <name type="common">Chicken</name>
    <dbReference type="NCBI Taxonomy" id="9031"/>
    <lineage>
        <taxon>Eukaryota</taxon>
        <taxon>Metazoa</taxon>
        <taxon>Chordata</taxon>
        <taxon>Craniata</taxon>
        <taxon>Vertebrata</taxon>
        <taxon>Euteleostomi</taxon>
        <taxon>Archelosauria</taxon>
        <taxon>Archosauria</taxon>
        <taxon>Dinosauria</taxon>
        <taxon>Saurischia</taxon>
        <taxon>Theropoda</taxon>
        <taxon>Coelurosauria</taxon>
        <taxon>Aves</taxon>
        <taxon>Neognathae</taxon>
        <taxon>Galloanserae</taxon>
        <taxon>Galliformes</taxon>
        <taxon>Phasianidae</taxon>
        <taxon>Phasianinae</taxon>
        <taxon>Gallus</taxon>
    </lineage>
</organism>
<dbReference type="EMBL" id="AJ719714">
    <property type="protein sequence ID" value="CAG31373.1"/>
    <property type="molecule type" value="mRNA"/>
</dbReference>
<dbReference type="RefSeq" id="NP_001026436.1">
    <property type="nucleotide sequence ID" value="NM_001031265.2"/>
</dbReference>
<dbReference type="SMR" id="Q5ZLM0"/>
<dbReference type="FunCoup" id="Q5ZLM0">
    <property type="interactions" value="2911"/>
</dbReference>
<dbReference type="STRING" id="9031.ENSGALP00000003888"/>
<dbReference type="PaxDb" id="9031-ENSGALP00000003888"/>
<dbReference type="GeneID" id="424356"/>
<dbReference type="KEGG" id="gga:424356"/>
<dbReference type="CTD" id="79577"/>
<dbReference type="VEuPathDB" id="HostDB:geneid_424356"/>
<dbReference type="eggNOG" id="KOG3786">
    <property type="taxonomic scope" value="Eukaryota"/>
</dbReference>
<dbReference type="HOGENOM" id="CLU_025849_0_1_1"/>
<dbReference type="InParanoid" id="Q5ZLM0"/>
<dbReference type="OMA" id="CAFHLKY"/>
<dbReference type="OrthoDB" id="2186602at2759"/>
<dbReference type="PhylomeDB" id="Q5ZLM0"/>
<dbReference type="TreeFam" id="TF313016"/>
<dbReference type="Reactome" id="R-GGA-201722">
    <property type="pathway name" value="Formation of the beta-catenin:TCF transactivating complex"/>
</dbReference>
<dbReference type="Reactome" id="R-GGA-5632684">
    <property type="pathway name" value="Hedgehog 'on' state"/>
</dbReference>
<dbReference type="Reactome" id="R-GGA-674695">
    <property type="pathway name" value="RNA Polymerase II Pre-transcription Events"/>
</dbReference>
<dbReference type="Reactome" id="R-GGA-75955">
    <property type="pathway name" value="RNA Polymerase II Transcription Elongation"/>
</dbReference>
<dbReference type="PRO" id="PR:Q5ZLM0"/>
<dbReference type="Proteomes" id="UP000000539">
    <property type="component" value="Chromosome 8"/>
</dbReference>
<dbReference type="Bgee" id="ENSGALG00000002469">
    <property type="expression patterns" value="Expressed in muscle tissue and 13 other cell types or tissues"/>
</dbReference>
<dbReference type="GO" id="GO:0016593">
    <property type="term" value="C:Cdc73/Paf1 complex"/>
    <property type="evidence" value="ECO:0000250"/>
    <property type="project" value="UniProtKB"/>
</dbReference>
<dbReference type="GO" id="GO:0005634">
    <property type="term" value="C:nucleus"/>
    <property type="evidence" value="ECO:0000250"/>
    <property type="project" value="UniProtKB"/>
</dbReference>
<dbReference type="GO" id="GO:0000993">
    <property type="term" value="F:RNA polymerase II complex binding"/>
    <property type="evidence" value="ECO:0000250"/>
    <property type="project" value="UniProtKB"/>
</dbReference>
<dbReference type="GO" id="GO:0001711">
    <property type="term" value="P:endodermal cell fate commitment"/>
    <property type="evidence" value="ECO:0000250"/>
    <property type="project" value="UniProtKB"/>
</dbReference>
<dbReference type="GO" id="GO:0031124">
    <property type="term" value="P:mRNA 3'-end processing"/>
    <property type="evidence" value="ECO:0000250"/>
    <property type="project" value="UniProtKB"/>
</dbReference>
<dbReference type="GO" id="GO:0008285">
    <property type="term" value="P:negative regulation of cell population proliferation"/>
    <property type="evidence" value="ECO:0000250"/>
    <property type="project" value="UniProtKB"/>
</dbReference>
<dbReference type="GO" id="GO:2000134">
    <property type="term" value="P:negative regulation of G1/S transition of mitotic cell cycle"/>
    <property type="evidence" value="ECO:0000250"/>
    <property type="project" value="UniProtKB"/>
</dbReference>
<dbReference type="GO" id="GO:0045638">
    <property type="term" value="P:negative regulation of myeloid cell differentiation"/>
    <property type="evidence" value="ECO:0000250"/>
    <property type="project" value="UniProtKB"/>
</dbReference>
<dbReference type="GO" id="GO:0000122">
    <property type="term" value="P:negative regulation of transcription by RNA polymerase II"/>
    <property type="evidence" value="ECO:0000250"/>
    <property type="project" value="UniProtKB"/>
</dbReference>
<dbReference type="GO" id="GO:1902808">
    <property type="term" value="P:positive regulation of cell cycle G1/S phase transition"/>
    <property type="evidence" value="ECO:0000250"/>
    <property type="project" value="UniProtKB"/>
</dbReference>
<dbReference type="GO" id="GO:0031442">
    <property type="term" value="P:positive regulation of mRNA 3'-end processing"/>
    <property type="evidence" value="ECO:0000250"/>
    <property type="project" value="UniProtKB"/>
</dbReference>
<dbReference type="GO" id="GO:0032968">
    <property type="term" value="P:positive regulation of transcription elongation by RNA polymerase II"/>
    <property type="evidence" value="ECO:0000318"/>
    <property type="project" value="GO_Central"/>
</dbReference>
<dbReference type="GO" id="GO:0030177">
    <property type="term" value="P:positive regulation of Wnt signaling pathway"/>
    <property type="evidence" value="ECO:0000250"/>
    <property type="project" value="UniProtKB"/>
</dbReference>
<dbReference type="GO" id="GO:0019827">
    <property type="term" value="P:stem cell population maintenance"/>
    <property type="evidence" value="ECO:0000250"/>
    <property type="project" value="UniProtKB"/>
</dbReference>
<dbReference type="GO" id="GO:0006368">
    <property type="term" value="P:transcription elongation by RNA polymerase II"/>
    <property type="evidence" value="ECO:0000250"/>
    <property type="project" value="UniProtKB"/>
</dbReference>
<dbReference type="FunFam" id="3.40.50.11990:FF:000001">
    <property type="entry name" value="Cell division cycle 73"/>
    <property type="match status" value="1"/>
</dbReference>
<dbReference type="Gene3D" id="3.40.50.11990">
    <property type="entry name" value="RNA polymerase II accessory factor, Cdc73 C-terminal domain"/>
    <property type="match status" value="1"/>
</dbReference>
<dbReference type="InterPro" id="IPR007852">
    <property type="entry name" value="Cdc73/Parafibromin"/>
</dbReference>
<dbReference type="InterPro" id="IPR031336">
    <property type="entry name" value="CDC73_C"/>
</dbReference>
<dbReference type="InterPro" id="IPR038103">
    <property type="entry name" value="CDC73_C_sf"/>
</dbReference>
<dbReference type="InterPro" id="IPR032041">
    <property type="entry name" value="Cdc73_N"/>
</dbReference>
<dbReference type="PANTHER" id="PTHR12466">
    <property type="entry name" value="CDC73 DOMAIN PROTEIN"/>
    <property type="match status" value="1"/>
</dbReference>
<dbReference type="PANTHER" id="PTHR12466:SF8">
    <property type="entry name" value="PARAFIBROMIN"/>
    <property type="match status" value="1"/>
</dbReference>
<dbReference type="Pfam" id="PF05179">
    <property type="entry name" value="CDC73_C"/>
    <property type="match status" value="1"/>
</dbReference>
<dbReference type="Pfam" id="PF16050">
    <property type="entry name" value="CDC73_N"/>
    <property type="match status" value="1"/>
</dbReference>
<feature type="chain" id="PRO_0000191806" description="Parafibromin">
    <location>
        <begin position="1"/>
        <end position="531"/>
    </location>
</feature>
<feature type="region of interest" description="Disordered" evidence="2">
    <location>
        <begin position="260"/>
        <end position="303"/>
    </location>
</feature>
<feature type="region of interest" description="Disordered" evidence="2">
    <location>
        <begin position="325"/>
        <end position="358"/>
    </location>
</feature>
<feature type="short sequence motif" description="Nuclear localization signal" evidence="1">
    <location>
        <begin position="125"/>
        <end position="139"/>
    </location>
</feature>
<feature type="compositionally biased region" description="Polar residues" evidence="2">
    <location>
        <begin position="273"/>
        <end position="282"/>
    </location>
</feature>
<feature type="compositionally biased region" description="Basic and acidic residues" evidence="2">
    <location>
        <begin position="293"/>
        <end position="303"/>
    </location>
</feature>
<feature type="compositionally biased region" description="Pro residues" evidence="2">
    <location>
        <begin position="338"/>
        <end position="352"/>
    </location>
</feature>
<protein>
    <recommendedName>
        <fullName>Parafibromin</fullName>
    </recommendedName>
    <alternativeName>
        <fullName>Cell division cycle protein 73 homolog</fullName>
    </alternativeName>
</protein>
<sequence length="531" mass="60698">MADVLSVLRQYNTQKKEIVVKGDEVIFGEFSWPKNVKTNYVIWGTGKEGQPREYYTLDSILFLLNNVHLSHPVYVRRAATENIPVVRRPDRKDLLAYLNGETSTSSSIDRSAPLEIGLQRSTQVKRAADEILAEAKKPRIEDEECVRLDKERLAARLEGHKEGIVQTEQIRSLSEAMSVEKIAAIKAKIMAKKRSTIKTDLDDDITALKQRSFVDAEVDVTRDIVSRERVWRTRTTILQSTGKNFAKNIFAILQSVKAREEGRAPEQRPAPNTAPTDPTLRNKQPIPAAYNRYDQERFKGKEETEGFKIDTMGTYHGMTLKSVTEGASARKTQTPAAQPVPRPVSQARPPPNQKKGSRTPIIIIPAATTSLITMLNAKDLLQDLKFVPSDEKKKQGCQRENETLIQRRKDQMQPGGTTVSVTVPYRVVDQPLKLMPQDWDRVVAVFVQGPAWQFKGWPWLLPDGSPVDIFAKIKAFHLKYDEVRLDPNVQKWDVTVLELSYHKRHLDRPVFLRFWETLDRYMVKHKSHLRF</sequence>
<keyword id="KW-0131">Cell cycle</keyword>
<keyword id="KW-0539">Nucleus</keyword>
<keyword id="KW-1185">Reference proteome</keyword>
<keyword id="KW-0804">Transcription</keyword>
<keyword id="KW-0043">Tumor suppressor</keyword>
<evidence type="ECO:0000250" key="1"/>
<evidence type="ECO:0000256" key="2">
    <source>
        <dbReference type="SAM" id="MobiDB-lite"/>
    </source>
</evidence>
<evidence type="ECO:0000305" key="3"/>
<accession>Q5ZLM0</accession>
<reference key="1">
    <citation type="journal article" date="2005" name="Genome Biol.">
        <title>Full-length cDNAs from chicken bursal lymphocytes to facilitate gene function analysis.</title>
        <authorList>
            <person name="Caldwell R.B."/>
            <person name="Kierzek A.M."/>
            <person name="Arakawa H."/>
            <person name="Bezzubov Y."/>
            <person name="Zaim J."/>
            <person name="Fiedler P."/>
            <person name="Kutter S."/>
            <person name="Blagodatski A."/>
            <person name="Kostovska D."/>
            <person name="Koter M."/>
            <person name="Plachy J."/>
            <person name="Carninci P."/>
            <person name="Hayashizaki Y."/>
            <person name="Buerstedde J.-M."/>
        </authorList>
    </citation>
    <scope>NUCLEOTIDE SEQUENCE [LARGE SCALE MRNA]</scope>
    <source>
        <strain>CB</strain>
        <tissue>Bursa of Fabricius</tissue>
    </source>
</reference>
<comment type="function">
    <text evidence="1">Tumor suppressor probably involved in transcriptional and post-transcriptional control pathways. May be involved in cell cycle progression through the regulation of cyclin D1/PRAD1 expression. Component of the PAF1 complex (PAF1C) which has multiple functions during transcription by RNA polymerase II. PAF1C associates with RNA polymerase II, is involved in transcriptional elongation and in histone modifications including methylation on histone H3 'Lys-4' (H3K4me3) (By similarity).</text>
</comment>
<comment type="subunit">
    <text evidence="1">Component of the PAF1 complex, which at least consists of CDC73, PAF1, LEO1, CTR9 and RTF1.</text>
</comment>
<comment type="subcellular location">
    <subcellularLocation>
        <location evidence="1">Nucleus</location>
    </subcellularLocation>
</comment>
<comment type="similarity">
    <text evidence="3">Belongs to the CDC73 family.</text>
</comment>
<proteinExistence type="evidence at transcript level"/>
<name>CDC73_CHICK</name>
<gene>
    <name type="primary">CDC73</name>
    <name type="ORF">RCJMB04_5j4</name>
</gene>